<protein>
    <recommendedName>
        <fullName evidence="1">Catalase-peroxidase</fullName>
        <shortName evidence="1">CP</shortName>
        <ecNumber evidence="1">1.11.1.21</ecNumber>
    </recommendedName>
    <alternativeName>
        <fullName evidence="1">Peroxidase/catalase</fullName>
    </alternativeName>
</protein>
<comment type="function">
    <text evidence="1">Bifunctional enzyme with both catalase and broad-spectrum peroxidase activity.</text>
</comment>
<comment type="catalytic activity">
    <reaction evidence="1">
        <text>H2O2 + AH2 = A + 2 H2O</text>
        <dbReference type="Rhea" id="RHEA:30275"/>
        <dbReference type="ChEBI" id="CHEBI:13193"/>
        <dbReference type="ChEBI" id="CHEBI:15377"/>
        <dbReference type="ChEBI" id="CHEBI:16240"/>
        <dbReference type="ChEBI" id="CHEBI:17499"/>
        <dbReference type="EC" id="1.11.1.21"/>
    </reaction>
</comment>
<comment type="catalytic activity">
    <reaction evidence="1">
        <text>2 H2O2 = O2 + 2 H2O</text>
        <dbReference type="Rhea" id="RHEA:20309"/>
        <dbReference type="ChEBI" id="CHEBI:15377"/>
        <dbReference type="ChEBI" id="CHEBI:15379"/>
        <dbReference type="ChEBI" id="CHEBI:16240"/>
        <dbReference type="EC" id="1.11.1.21"/>
    </reaction>
</comment>
<comment type="cofactor">
    <cofactor evidence="1">
        <name>heme b</name>
        <dbReference type="ChEBI" id="CHEBI:60344"/>
    </cofactor>
    <text evidence="1">Binds 1 heme b (iron(II)-protoporphyrin IX) group per dimer.</text>
</comment>
<comment type="subunit">
    <text evidence="1">Homodimer or homotetramer.</text>
</comment>
<comment type="PTM">
    <text evidence="1">Formation of the three residue Trp-Tyr-Met cross-link is important for the catalase, but not the peroxidase activity of the enzyme.</text>
</comment>
<comment type="similarity">
    <text evidence="1">Belongs to the peroxidase family. Peroxidase/catalase subfamily.</text>
</comment>
<keyword id="KW-0349">Heme</keyword>
<keyword id="KW-0376">Hydrogen peroxide</keyword>
<keyword id="KW-0408">Iron</keyword>
<keyword id="KW-0479">Metal-binding</keyword>
<keyword id="KW-0560">Oxidoreductase</keyword>
<keyword id="KW-0575">Peroxidase</keyword>
<name>KATG_BURL3</name>
<reference key="1">
    <citation type="submission" date="2005-10" db="EMBL/GenBank/DDBJ databases">
        <title>Complete sequence of chromosome 1 of Burkholderia sp. 383.</title>
        <authorList>
            <consortium name="US DOE Joint Genome Institute"/>
            <person name="Copeland A."/>
            <person name="Lucas S."/>
            <person name="Lapidus A."/>
            <person name="Barry K."/>
            <person name="Detter J.C."/>
            <person name="Glavina T."/>
            <person name="Hammon N."/>
            <person name="Israni S."/>
            <person name="Pitluck S."/>
            <person name="Chain P."/>
            <person name="Malfatti S."/>
            <person name="Shin M."/>
            <person name="Vergez L."/>
            <person name="Schmutz J."/>
            <person name="Larimer F."/>
            <person name="Land M."/>
            <person name="Kyrpides N."/>
            <person name="Lykidis A."/>
            <person name="Richardson P."/>
        </authorList>
    </citation>
    <scope>NUCLEOTIDE SEQUENCE [LARGE SCALE GENOMIC DNA]</scope>
    <source>
        <strain>ATCC 17760 / DSM 23089 / LMG 22485 / NCIMB 9086 / R18194 / 383</strain>
    </source>
</reference>
<organism>
    <name type="scientific">Burkholderia lata (strain ATCC 17760 / DSM 23089 / LMG 22485 / NCIMB 9086 / R18194 / 383)</name>
    <dbReference type="NCBI Taxonomy" id="482957"/>
    <lineage>
        <taxon>Bacteria</taxon>
        <taxon>Pseudomonadati</taxon>
        <taxon>Pseudomonadota</taxon>
        <taxon>Betaproteobacteria</taxon>
        <taxon>Burkholderiales</taxon>
        <taxon>Burkholderiaceae</taxon>
        <taxon>Burkholderia</taxon>
        <taxon>Burkholderia cepacia complex</taxon>
    </lineage>
</organism>
<sequence>MSNETKCPFNHTAGGGTTNKDWWPNQLNLNILHRHSALSDPMDKDFDYAEAFKKLDLAAVKKDLHALMTASQDWWPADFGHYGGLFVRMAWHSAGTYRTADGRGGAGGGQQRFAPLNSWPDNVSLDKARRLLWPIKQKYGRNISWADLLILTGNVALESMGFKTFGYAGGRVDTWEPDDVYWGSEKIWLELSGGPNSRYSGKRDLESPLAAVQMGLIYVNPEGPDGTPDPVAAAHDIRETFARMAMNDEETVALIAGGHTFGKTHGAGPASNVGAEPEAAGLEEQGLGWKSTFGTGKGKDAITSGLEVTWTSTPTQWSNDFFKHLFSYEWELTKSPAGAHQWVAKDAGDVIPDAFDASKKHRPTMLTTDLSLRFDPAYEKISRRFYENPAEFADAFARAWFKLTHRDMGPRARYLGPDVPAEHLLWQDPIPAVDHKLIDDADVAALKAKVLASGLSVSQLVSTAWASAATFRGSDKRGGANGARIRLAPQKDWEVNRPAELAKVLATLEGVQKAFNDAQTGGKKVSLADLIVLAGAAGVEQAAKNAGVAVTVPFAPGRADATQEETDIEAMAVLEPVADGFRNFLKHAYQTPAEALLVDKAQLLTLTAPEMTALVGGLRVLGANAGDAKQGVFTDRPEALTNDFFVNLLDMGTEWKPVSAANDVFEGRDRATGQVKWTGSRVDLIFGSHAQLRALAEVYGSADAKEKFAHDFVAAWNKVMNLDRFDLA</sequence>
<gene>
    <name evidence="1" type="primary">katG</name>
    <name type="ordered locus">Bcep18194_A3814</name>
</gene>
<accession>Q39JF1</accession>
<feature type="chain" id="PRO_0000354750" description="Catalase-peroxidase">
    <location>
        <begin position="1"/>
        <end position="728"/>
    </location>
</feature>
<feature type="active site" description="Proton acceptor" evidence="1">
    <location>
        <position position="92"/>
    </location>
</feature>
<feature type="binding site" description="axial binding residue" evidence="1">
    <location>
        <position position="259"/>
    </location>
    <ligand>
        <name>heme b</name>
        <dbReference type="ChEBI" id="CHEBI:60344"/>
    </ligand>
    <ligandPart>
        <name>Fe</name>
        <dbReference type="ChEBI" id="CHEBI:18248"/>
    </ligandPart>
</feature>
<feature type="site" description="Transition state stabilizer" evidence="1">
    <location>
        <position position="88"/>
    </location>
</feature>
<feature type="cross-link" description="Tryptophyl-tyrosyl-methioninium (Trp-Tyr) (with M-244)" evidence="1">
    <location>
        <begin position="91"/>
        <end position="218"/>
    </location>
</feature>
<feature type="cross-link" description="Tryptophyl-tyrosyl-methioninium (Tyr-Met) (with W-91)" evidence="1">
    <location>
        <begin position="218"/>
        <end position="244"/>
    </location>
</feature>
<evidence type="ECO:0000255" key="1">
    <source>
        <dbReference type="HAMAP-Rule" id="MF_01961"/>
    </source>
</evidence>
<proteinExistence type="inferred from homology"/>
<dbReference type="EC" id="1.11.1.21" evidence="1"/>
<dbReference type="EMBL" id="CP000151">
    <property type="protein sequence ID" value="ABB07415.1"/>
    <property type="molecule type" value="Genomic_DNA"/>
</dbReference>
<dbReference type="RefSeq" id="WP_011351001.1">
    <property type="nucleotide sequence ID" value="NC_007510.1"/>
</dbReference>
<dbReference type="SMR" id="Q39JF1"/>
<dbReference type="PeroxiBase" id="2314">
    <property type="entry name" value="BUspCP01_R18194"/>
</dbReference>
<dbReference type="GeneID" id="45093726"/>
<dbReference type="KEGG" id="bur:Bcep18194_A3814"/>
<dbReference type="PATRIC" id="fig|482957.22.peg.678"/>
<dbReference type="HOGENOM" id="CLU_025424_2_0_4"/>
<dbReference type="Proteomes" id="UP000002705">
    <property type="component" value="Chromosome 1"/>
</dbReference>
<dbReference type="GO" id="GO:0005829">
    <property type="term" value="C:cytosol"/>
    <property type="evidence" value="ECO:0007669"/>
    <property type="project" value="TreeGrafter"/>
</dbReference>
<dbReference type="GO" id="GO:0004096">
    <property type="term" value="F:catalase activity"/>
    <property type="evidence" value="ECO:0007669"/>
    <property type="project" value="UniProtKB-UniRule"/>
</dbReference>
<dbReference type="GO" id="GO:0020037">
    <property type="term" value="F:heme binding"/>
    <property type="evidence" value="ECO:0007669"/>
    <property type="project" value="InterPro"/>
</dbReference>
<dbReference type="GO" id="GO:0046872">
    <property type="term" value="F:metal ion binding"/>
    <property type="evidence" value="ECO:0007669"/>
    <property type="project" value="UniProtKB-KW"/>
</dbReference>
<dbReference type="GO" id="GO:0070301">
    <property type="term" value="P:cellular response to hydrogen peroxide"/>
    <property type="evidence" value="ECO:0007669"/>
    <property type="project" value="TreeGrafter"/>
</dbReference>
<dbReference type="GO" id="GO:0042744">
    <property type="term" value="P:hydrogen peroxide catabolic process"/>
    <property type="evidence" value="ECO:0007669"/>
    <property type="project" value="UniProtKB-KW"/>
</dbReference>
<dbReference type="CDD" id="cd00649">
    <property type="entry name" value="catalase_peroxidase_1"/>
    <property type="match status" value="1"/>
</dbReference>
<dbReference type="CDD" id="cd08200">
    <property type="entry name" value="catalase_peroxidase_2"/>
    <property type="match status" value="1"/>
</dbReference>
<dbReference type="FunFam" id="1.10.420.10:FF:000002">
    <property type="entry name" value="Catalase-peroxidase"/>
    <property type="match status" value="1"/>
</dbReference>
<dbReference type="FunFam" id="1.10.420.10:FF:000004">
    <property type="entry name" value="Catalase-peroxidase"/>
    <property type="match status" value="1"/>
</dbReference>
<dbReference type="FunFam" id="1.10.520.10:FF:000002">
    <property type="entry name" value="Catalase-peroxidase"/>
    <property type="match status" value="1"/>
</dbReference>
<dbReference type="FunFam" id="1.10.520.10:FF:000004">
    <property type="entry name" value="Catalase-peroxidase"/>
    <property type="match status" value="1"/>
</dbReference>
<dbReference type="Gene3D" id="1.10.520.10">
    <property type="match status" value="2"/>
</dbReference>
<dbReference type="Gene3D" id="1.10.420.10">
    <property type="entry name" value="Peroxidase, domain 2"/>
    <property type="match status" value="2"/>
</dbReference>
<dbReference type="HAMAP" id="MF_01961">
    <property type="entry name" value="Catal_peroxid"/>
    <property type="match status" value="1"/>
</dbReference>
<dbReference type="InterPro" id="IPR000763">
    <property type="entry name" value="Catalase_peroxidase"/>
</dbReference>
<dbReference type="InterPro" id="IPR002016">
    <property type="entry name" value="Haem_peroxidase"/>
</dbReference>
<dbReference type="InterPro" id="IPR010255">
    <property type="entry name" value="Haem_peroxidase_sf"/>
</dbReference>
<dbReference type="InterPro" id="IPR019794">
    <property type="entry name" value="Peroxidases_AS"/>
</dbReference>
<dbReference type="InterPro" id="IPR019793">
    <property type="entry name" value="Peroxidases_heam-ligand_BS"/>
</dbReference>
<dbReference type="NCBIfam" id="TIGR00198">
    <property type="entry name" value="cat_per_HPI"/>
    <property type="match status" value="1"/>
</dbReference>
<dbReference type="NCBIfam" id="NF011635">
    <property type="entry name" value="PRK15061.1"/>
    <property type="match status" value="1"/>
</dbReference>
<dbReference type="PANTHER" id="PTHR30555:SF0">
    <property type="entry name" value="CATALASE-PEROXIDASE"/>
    <property type="match status" value="1"/>
</dbReference>
<dbReference type="PANTHER" id="PTHR30555">
    <property type="entry name" value="HYDROPEROXIDASE I, BIFUNCTIONAL CATALASE-PEROXIDASE"/>
    <property type="match status" value="1"/>
</dbReference>
<dbReference type="Pfam" id="PF00141">
    <property type="entry name" value="peroxidase"/>
    <property type="match status" value="2"/>
</dbReference>
<dbReference type="PRINTS" id="PR00460">
    <property type="entry name" value="BPEROXIDASE"/>
</dbReference>
<dbReference type="PRINTS" id="PR00458">
    <property type="entry name" value="PEROXIDASE"/>
</dbReference>
<dbReference type="SUPFAM" id="SSF48113">
    <property type="entry name" value="Heme-dependent peroxidases"/>
    <property type="match status" value="2"/>
</dbReference>
<dbReference type="PROSITE" id="PS00435">
    <property type="entry name" value="PEROXIDASE_1"/>
    <property type="match status" value="1"/>
</dbReference>
<dbReference type="PROSITE" id="PS00436">
    <property type="entry name" value="PEROXIDASE_2"/>
    <property type="match status" value="1"/>
</dbReference>
<dbReference type="PROSITE" id="PS50873">
    <property type="entry name" value="PEROXIDASE_4"/>
    <property type="match status" value="1"/>
</dbReference>